<evidence type="ECO:0000255" key="1">
    <source>
        <dbReference type="HAMAP-Rule" id="MF_00050"/>
    </source>
</evidence>
<name>EFTS_ACET2</name>
<proteinExistence type="inferred from homology"/>
<gene>
    <name evidence="1" type="primary">tsf</name>
    <name type="ordered locus">Cthe_1005</name>
</gene>
<organism>
    <name type="scientific">Acetivibrio thermocellus (strain ATCC 27405 / DSM 1237 / JCM 9322 / NBRC 103400 / NCIMB 10682 / NRRL B-4536 / VPI 7372)</name>
    <name type="common">Clostridium thermocellum</name>
    <dbReference type="NCBI Taxonomy" id="203119"/>
    <lineage>
        <taxon>Bacteria</taxon>
        <taxon>Bacillati</taxon>
        <taxon>Bacillota</taxon>
        <taxon>Clostridia</taxon>
        <taxon>Eubacteriales</taxon>
        <taxon>Oscillospiraceae</taxon>
        <taxon>Acetivibrio</taxon>
    </lineage>
</organism>
<sequence>MVTAEMVKELRERTGAGMMECKKALTEANGDMEKAIEILRERGLAAAAKKAGRIAAEGVVDAYIHGDGRIGVLVEINTETDFAAKNEDFRTFVKDIAMHIAASKPEYISRDEVPAERVEKEKEILRAQALNEGKPEKIVEKMVEGRLEKFYKEICLLEQPFIKDPDKTVQQLLNEKIAIIGENINIRRFVRFERGEGIQKKEENFAEEVMKQING</sequence>
<dbReference type="EMBL" id="CP000568">
    <property type="protein sequence ID" value="ABN52237.1"/>
    <property type="molecule type" value="Genomic_DNA"/>
</dbReference>
<dbReference type="RefSeq" id="WP_003515565.1">
    <property type="nucleotide sequence ID" value="NC_009012.1"/>
</dbReference>
<dbReference type="SMR" id="A3DE58"/>
<dbReference type="STRING" id="203119.Cthe_1005"/>
<dbReference type="GeneID" id="35804131"/>
<dbReference type="KEGG" id="cth:Cthe_1005"/>
<dbReference type="eggNOG" id="COG0264">
    <property type="taxonomic scope" value="Bacteria"/>
</dbReference>
<dbReference type="HOGENOM" id="CLU_047155_1_1_9"/>
<dbReference type="OrthoDB" id="9808348at2"/>
<dbReference type="Proteomes" id="UP000002145">
    <property type="component" value="Chromosome"/>
</dbReference>
<dbReference type="GO" id="GO:0005737">
    <property type="term" value="C:cytoplasm"/>
    <property type="evidence" value="ECO:0007669"/>
    <property type="project" value="UniProtKB-SubCell"/>
</dbReference>
<dbReference type="GO" id="GO:0003746">
    <property type="term" value="F:translation elongation factor activity"/>
    <property type="evidence" value="ECO:0007669"/>
    <property type="project" value="UniProtKB-UniRule"/>
</dbReference>
<dbReference type="CDD" id="cd14275">
    <property type="entry name" value="UBA_EF-Ts"/>
    <property type="match status" value="1"/>
</dbReference>
<dbReference type="FunFam" id="1.10.286.20:FF:000003">
    <property type="entry name" value="Elongation factor Ts"/>
    <property type="match status" value="1"/>
</dbReference>
<dbReference type="FunFam" id="1.10.8.10:FF:000001">
    <property type="entry name" value="Elongation factor Ts"/>
    <property type="match status" value="1"/>
</dbReference>
<dbReference type="Gene3D" id="1.10.286.20">
    <property type="match status" value="1"/>
</dbReference>
<dbReference type="Gene3D" id="1.10.8.10">
    <property type="entry name" value="DNA helicase RuvA subunit, C-terminal domain"/>
    <property type="match status" value="1"/>
</dbReference>
<dbReference type="Gene3D" id="3.30.479.20">
    <property type="entry name" value="Elongation factor Ts, dimerisation domain"/>
    <property type="match status" value="1"/>
</dbReference>
<dbReference type="HAMAP" id="MF_00050">
    <property type="entry name" value="EF_Ts"/>
    <property type="match status" value="1"/>
</dbReference>
<dbReference type="InterPro" id="IPR036402">
    <property type="entry name" value="EF-Ts_dimer_sf"/>
</dbReference>
<dbReference type="InterPro" id="IPR001816">
    <property type="entry name" value="Transl_elong_EFTs/EF1B"/>
</dbReference>
<dbReference type="InterPro" id="IPR014039">
    <property type="entry name" value="Transl_elong_EFTs/EF1B_dimer"/>
</dbReference>
<dbReference type="InterPro" id="IPR018101">
    <property type="entry name" value="Transl_elong_Ts_CS"/>
</dbReference>
<dbReference type="InterPro" id="IPR009060">
    <property type="entry name" value="UBA-like_sf"/>
</dbReference>
<dbReference type="NCBIfam" id="TIGR00116">
    <property type="entry name" value="tsf"/>
    <property type="match status" value="2"/>
</dbReference>
<dbReference type="PANTHER" id="PTHR11741">
    <property type="entry name" value="ELONGATION FACTOR TS"/>
    <property type="match status" value="1"/>
</dbReference>
<dbReference type="PANTHER" id="PTHR11741:SF0">
    <property type="entry name" value="ELONGATION FACTOR TS, MITOCHONDRIAL"/>
    <property type="match status" value="1"/>
</dbReference>
<dbReference type="Pfam" id="PF00889">
    <property type="entry name" value="EF_TS"/>
    <property type="match status" value="1"/>
</dbReference>
<dbReference type="SUPFAM" id="SSF54713">
    <property type="entry name" value="Elongation factor Ts (EF-Ts), dimerisation domain"/>
    <property type="match status" value="1"/>
</dbReference>
<dbReference type="SUPFAM" id="SSF46934">
    <property type="entry name" value="UBA-like"/>
    <property type="match status" value="1"/>
</dbReference>
<dbReference type="PROSITE" id="PS01126">
    <property type="entry name" value="EF_TS_1"/>
    <property type="match status" value="1"/>
</dbReference>
<accession>A3DE58</accession>
<keyword id="KW-0963">Cytoplasm</keyword>
<keyword id="KW-0251">Elongation factor</keyword>
<keyword id="KW-0648">Protein biosynthesis</keyword>
<keyword id="KW-1185">Reference proteome</keyword>
<protein>
    <recommendedName>
        <fullName evidence="1">Elongation factor Ts</fullName>
        <shortName evidence="1">EF-Ts</shortName>
    </recommendedName>
</protein>
<reference key="1">
    <citation type="submission" date="2007-02" db="EMBL/GenBank/DDBJ databases">
        <title>Complete sequence of Clostridium thermocellum ATCC 27405.</title>
        <authorList>
            <consortium name="US DOE Joint Genome Institute"/>
            <person name="Copeland A."/>
            <person name="Lucas S."/>
            <person name="Lapidus A."/>
            <person name="Barry K."/>
            <person name="Detter J.C."/>
            <person name="Glavina del Rio T."/>
            <person name="Hammon N."/>
            <person name="Israni S."/>
            <person name="Dalin E."/>
            <person name="Tice H."/>
            <person name="Pitluck S."/>
            <person name="Chertkov O."/>
            <person name="Brettin T."/>
            <person name="Bruce D."/>
            <person name="Han C."/>
            <person name="Tapia R."/>
            <person name="Gilna P."/>
            <person name="Schmutz J."/>
            <person name="Larimer F."/>
            <person name="Land M."/>
            <person name="Hauser L."/>
            <person name="Kyrpides N."/>
            <person name="Mikhailova N."/>
            <person name="Wu J.H.D."/>
            <person name="Newcomb M."/>
            <person name="Richardson P."/>
        </authorList>
    </citation>
    <scope>NUCLEOTIDE SEQUENCE [LARGE SCALE GENOMIC DNA]</scope>
    <source>
        <strain>ATCC 27405 / DSM 1237 / JCM 9322 / NBRC 103400 / NCIMB 10682 / NRRL B-4536 / VPI 7372</strain>
    </source>
</reference>
<feature type="chain" id="PRO_0000323450" description="Elongation factor Ts">
    <location>
        <begin position="1"/>
        <end position="215"/>
    </location>
</feature>
<feature type="region of interest" description="Involved in Mg(2+) ion dislocation from EF-Tu" evidence="1">
    <location>
        <begin position="80"/>
        <end position="83"/>
    </location>
</feature>
<comment type="function">
    <text evidence="1">Associates with the EF-Tu.GDP complex and induces the exchange of GDP to GTP. It remains bound to the aminoacyl-tRNA.EF-Tu.GTP complex up to the GTP hydrolysis stage on the ribosome.</text>
</comment>
<comment type="subcellular location">
    <subcellularLocation>
        <location evidence="1">Cytoplasm</location>
    </subcellularLocation>
</comment>
<comment type="similarity">
    <text evidence="1">Belongs to the EF-Ts family.</text>
</comment>